<protein>
    <recommendedName>
        <fullName evidence="3">Putative glycyl-radical enzyme activating enzyme MJ0021</fullName>
        <shortName evidence="3">GRE activating enzyme MJ0021</shortName>
        <ecNumber evidence="1">1.97.1.-</ecNumber>
    </recommendedName>
</protein>
<gene>
    <name type="ordered locus">MJ0021</name>
</gene>
<organism>
    <name type="scientific">Methanocaldococcus jannaschii (strain ATCC 43067 / DSM 2661 / JAL-1 / JCM 10045 / NBRC 100440)</name>
    <name type="common">Methanococcus jannaschii</name>
    <dbReference type="NCBI Taxonomy" id="243232"/>
    <lineage>
        <taxon>Archaea</taxon>
        <taxon>Methanobacteriati</taxon>
        <taxon>Methanobacteriota</taxon>
        <taxon>Methanomada group</taxon>
        <taxon>Methanococci</taxon>
        <taxon>Methanococcales</taxon>
        <taxon>Methanocaldococcaceae</taxon>
        <taxon>Methanocaldococcus</taxon>
    </lineage>
</organism>
<proteinExistence type="inferred from homology"/>
<evidence type="ECO:0000250" key="1">
    <source>
        <dbReference type="UniProtKB" id="P0A9N4"/>
    </source>
</evidence>
<evidence type="ECO:0000255" key="2">
    <source>
        <dbReference type="PROSITE-ProRule" id="PRU01266"/>
    </source>
</evidence>
<evidence type="ECO:0000305" key="3"/>
<feature type="chain" id="PRO_0000200544" description="Putative glycyl-radical enzyme activating enzyme MJ0021">
    <location>
        <begin position="1"/>
        <end position="375"/>
    </location>
</feature>
<feature type="domain" description="Radical SAM core" evidence="2">
    <location>
        <begin position="23"/>
        <end position="246"/>
    </location>
</feature>
<feature type="binding site" evidence="1">
    <location>
        <position position="38"/>
    </location>
    <ligand>
        <name>[4Fe-4S] cluster</name>
        <dbReference type="ChEBI" id="CHEBI:49883"/>
        <note>4Fe-4S-S-AdoMet</note>
    </ligand>
</feature>
<feature type="binding site" evidence="1">
    <location>
        <position position="42"/>
    </location>
    <ligand>
        <name>[4Fe-4S] cluster</name>
        <dbReference type="ChEBI" id="CHEBI:49883"/>
        <note>4Fe-4S-S-AdoMet</note>
    </ligand>
</feature>
<feature type="binding site" evidence="1">
    <location>
        <begin position="44"/>
        <end position="46"/>
    </location>
    <ligand>
        <name>S-adenosyl-L-methionine</name>
        <dbReference type="ChEBI" id="CHEBI:59789"/>
    </ligand>
</feature>
<feature type="binding site" evidence="1">
    <location>
        <position position="45"/>
    </location>
    <ligand>
        <name>[4Fe-4S] cluster</name>
        <dbReference type="ChEBI" id="CHEBI:49883"/>
        <note>4Fe-4S-S-AdoMet</note>
    </ligand>
</feature>
<feature type="binding site" evidence="1">
    <location>
        <position position="87"/>
    </location>
    <ligand>
        <name>S-adenosyl-L-methionine</name>
        <dbReference type="ChEBI" id="CHEBI:59789"/>
    </ligand>
</feature>
<accession>Q60332</accession>
<dbReference type="EC" id="1.97.1.-" evidence="1"/>
<dbReference type="EMBL" id="L77117">
    <property type="protein sequence ID" value="AAB98003.1"/>
    <property type="molecule type" value="Genomic_DNA"/>
</dbReference>
<dbReference type="PIR" id="E64302">
    <property type="entry name" value="E64302"/>
</dbReference>
<dbReference type="RefSeq" id="WP_010869513.1">
    <property type="nucleotide sequence ID" value="NC_000909.1"/>
</dbReference>
<dbReference type="SMR" id="Q60332"/>
<dbReference type="STRING" id="243232.MJ_0021"/>
<dbReference type="PaxDb" id="243232-MJ_0021"/>
<dbReference type="EnsemblBacteria" id="AAB98003">
    <property type="protein sequence ID" value="AAB98003"/>
    <property type="gene ID" value="MJ_0021"/>
</dbReference>
<dbReference type="GeneID" id="1450859"/>
<dbReference type="KEGG" id="mja:MJ_0021"/>
<dbReference type="eggNOG" id="arCOG00932">
    <property type="taxonomic scope" value="Archaea"/>
</dbReference>
<dbReference type="HOGENOM" id="CLU_053467_0_0_2"/>
<dbReference type="InParanoid" id="Q60332"/>
<dbReference type="OrthoDB" id="372128at2157"/>
<dbReference type="PhylomeDB" id="Q60332"/>
<dbReference type="Proteomes" id="UP000000805">
    <property type="component" value="Chromosome"/>
</dbReference>
<dbReference type="GO" id="GO:0051539">
    <property type="term" value="F:4 iron, 4 sulfur cluster binding"/>
    <property type="evidence" value="ECO:0007669"/>
    <property type="project" value="UniProtKB-KW"/>
</dbReference>
<dbReference type="GO" id="GO:0046872">
    <property type="term" value="F:metal ion binding"/>
    <property type="evidence" value="ECO:0007669"/>
    <property type="project" value="UniProtKB-KW"/>
</dbReference>
<dbReference type="GO" id="GO:0016491">
    <property type="term" value="F:oxidoreductase activity"/>
    <property type="evidence" value="ECO:0007669"/>
    <property type="project" value="UniProtKB-KW"/>
</dbReference>
<dbReference type="CDD" id="cd01335">
    <property type="entry name" value="Radical_SAM"/>
    <property type="match status" value="1"/>
</dbReference>
<dbReference type="Gene3D" id="3.20.20.70">
    <property type="entry name" value="Aldolase class I"/>
    <property type="match status" value="1"/>
</dbReference>
<dbReference type="InterPro" id="IPR013785">
    <property type="entry name" value="Aldolase_TIM"/>
</dbReference>
<dbReference type="InterPro" id="IPR040087">
    <property type="entry name" value="MJ0021-like"/>
</dbReference>
<dbReference type="InterPro" id="IPR001989">
    <property type="entry name" value="Radical_activat_CS"/>
</dbReference>
<dbReference type="InterPro" id="IPR007197">
    <property type="entry name" value="rSAM"/>
</dbReference>
<dbReference type="PANTHER" id="PTHR43288">
    <property type="entry name" value="BIOTIN SYNTHASE-RELATED PROTEIN, RADICAL SAM SUPERFAMILY"/>
    <property type="match status" value="1"/>
</dbReference>
<dbReference type="PANTHER" id="PTHR43288:SF1">
    <property type="entry name" value="GLYCYL-RADICAL ENZYME ACTIVATING ENZYME MJ0021-RELATED"/>
    <property type="match status" value="1"/>
</dbReference>
<dbReference type="Pfam" id="PF13353">
    <property type="entry name" value="Fer4_12"/>
    <property type="match status" value="1"/>
</dbReference>
<dbReference type="Pfam" id="PF04055">
    <property type="entry name" value="Radical_SAM"/>
    <property type="match status" value="1"/>
</dbReference>
<dbReference type="SFLD" id="SFLDS00029">
    <property type="entry name" value="Radical_SAM"/>
    <property type="match status" value="1"/>
</dbReference>
<dbReference type="SFLD" id="SFLDG01108">
    <property type="entry name" value="Uncharacterised_Radical_SAM_Su"/>
    <property type="match status" value="1"/>
</dbReference>
<dbReference type="SUPFAM" id="SSF102114">
    <property type="entry name" value="Radical SAM enzymes"/>
    <property type="match status" value="1"/>
</dbReference>
<dbReference type="PROSITE" id="PS01087">
    <property type="entry name" value="RADICAL_ACTIVATING"/>
    <property type="match status" value="1"/>
</dbReference>
<dbReference type="PROSITE" id="PS51918">
    <property type="entry name" value="RADICAL_SAM"/>
    <property type="match status" value="1"/>
</dbReference>
<keyword id="KW-0004">4Fe-4S</keyword>
<keyword id="KW-0408">Iron</keyword>
<keyword id="KW-0411">Iron-sulfur</keyword>
<keyword id="KW-0479">Metal-binding</keyword>
<keyword id="KW-0560">Oxidoreductase</keyword>
<keyword id="KW-1185">Reference proteome</keyword>
<keyword id="KW-0949">S-adenosyl-L-methionine</keyword>
<reference key="1">
    <citation type="journal article" date="1996" name="Science">
        <title>Complete genome sequence of the methanogenic archaeon, Methanococcus jannaschii.</title>
        <authorList>
            <person name="Bult C.J."/>
            <person name="White O."/>
            <person name="Olsen G.J."/>
            <person name="Zhou L."/>
            <person name="Fleischmann R.D."/>
            <person name="Sutton G.G."/>
            <person name="Blake J.A."/>
            <person name="FitzGerald L.M."/>
            <person name="Clayton R.A."/>
            <person name="Gocayne J.D."/>
            <person name="Kerlavage A.R."/>
            <person name="Dougherty B.A."/>
            <person name="Tomb J.-F."/>
            <person name="Adams M.D."/>
            <person name="Reich C.I."/>
            <person name="Overbeek R."/>
            <person name="Kirkness E.F."/>
            <person name="Weinstock K.G."/>
            <person name="Merrick J.M."/>
            <person name="Glodek A."/>
            <person name="Scott J.L."/>
            <person name="Geoghagen N.S.M."/>
            <person name="Weidman J.F."/>
            <person name="Fuhrmann J.L."/>
            <person name="Nguyen D."/>
            <person name="Utterback T.R."/>
            <person name="Kelley J.M."/>
            <person name="Peterson J.D."/>
            <person name="Sadow P.W."/>
            <person name="Hanna M.C."/>
            <person name="Cotton M.D."/>
            <person name="Roberts K.M."/>
            <person name="Hurst M.A."/>
            <person name="Kaine B.P."/>
            <person name="Borodovsky M."/>
            <person name="Klenk H.-P."/>
            <person name="Fraser C.M."/>
            <person name="Smith H.O."/>
            <person name="Woese C.R."/>
            <person name="Venter J.C."/>
        </authorList>
    </citation>
    <scope>NUCLEOTIDE SEQUENCE [LARGE SCALE GENOMIC DNA]</scope>
    <source>
        <strain>ATCC 43067 / DSM 2661 / JAL-1 / JCM 10045 / NBRC 100440</strain>
    </source>
</reference>
<sequence>MNVEEIEKYLEENFDKLPEGCKQCVKGGKLVLFITGICNNNCYYCPLSEKRKNKDVIYANERLITTVEEAIEEAKLCSSKGVGITGGNPLLKINRTVKFLKALKKEFDEFHAHLYTTPETVNEENLKLLKEADLDEIRLHPTKIFNEGYDEEYIKFLCNKLNLCNKYIEDVGVEIPAIPNMENEILKLAEAIDGIAKFMNINELEFSEENYHELEKRGFMPKDDVSNAIAGSEETALKVIKEFKGDLFINYCPSVLKDAIQMRNRLINRAKNVAKPYEVITEDGLLLRGIMIFDNEDDLKEMAEILEENEIEFEIIDKNICLNPFILEDIIEEMKRQRFPITFSAYISELYPTADALEVERIPLITKKLKFRRRR</sequence>
<comment type="catalytic activity">
    <reaction evidence="1">
        <text>glycyl-[protein] + reduced [flavodoxin] + S-adenosyl-L-methionine = glycin-2-yl radical-[protein] + semiquinone [flavodoxin] + 5'-deoxyadenosine + L-methionine + H(+)</text>
        <dbReference type="Rhea" id="RHEA:61976"/>
        <dbReference type="Rhea" id="RHEA-COMP:10622"/>
        <dbReference type="Rhea" id="RHEA-COMP:14480"/>
        <dbReference type="Rhea" id="RHEA-COMP:15993"/>
        <dbReference type="Rhea" id="RHEA-COMP:15994"/>
        <dbReference type="ChEBI" id="CHEBI:15378"/>
        <dbReference type="ChEBI" id="CHEBI:17319"/>
        <dbReference type="ChEBI" id="CHEBI:29947"/>
        <dbReference type="ChEBI" id="CHEBI:32722"/>
        <dbReference type="ChEBI" id="CHEBI:57618"/>
        <dbReference type="ChEBI" id="CHEBI:57844"/>
        <dbReference type="ChEBI" id="CHEBI:59789"/>
        <dbReference type="ChEBI" id="CHEBI:140311"/>
    </reaction>
</comment>
<comment type="cofactor">
    <cofactor evidence="1">
        <name>[4Fe-4S] cluster</name>
        <dbReference type="ChEBI" id="CHEBI:49883"/>
    </cofactor>
    <text evidence="1">Binds 1 [4Fe-4S] cluster. The cluster is coordinated with 3 cysteines and an exchangeable S-adenosyl-L-methionine.</text>
</comment>
<comment type="similarity">
    <text evidence="3">Belongs to the organic radical-activating enzymes family.</text>
</comment>
<name>Y021_METJA</name>